<protein>
    <recommendedName>
        <fullName>Cytochrome c oxidase subunit 1</fullName>
        <ecNumber>7.1.1.9</ecNumber>
    </recommendedName>
    <alternativeName>
        <fullName>Cytochrome c oxidase polypeptide I</fullName>
    </alternativeName>
</protein>
<keyword id="KW-0106">Calcium</keyword>
<keyword id="KW-0186">Copper</keyword>
<keyword id="KW-0249">Electron transport</keyword>
<keyword id="KW-0349">Heme</keyword>
<keyword id="KW-0408">Iron</keyword>
<keyword id="KW-0472">Membrane</keyword>
<keyword id="KW-0479">Metal-binding</keyword>
<keyword id="KW-0496">Mitochondrion</keyword>
<keyword id="KW-0999">Mitochondrion inner membrane</keyword>
<keyword id="KW-1185">Reference proteome</keyword>
<keyword id="KW-0679">Respiratory chain</keyword>
<keyword id="KW-1278">Translocase</keyword>
<keyword id="KW-0812">Transmembrane</keyword>
<keyword id="KW-1133">Transmembrane helix</keyword>
<keyword id="KW-0813">Transport</keyword>
<reference key="1">
    <citation type="submission" date="2000-12" db="EMBL/GenBank/DDBJ databases">
        <title>Octopus vulgaris mRNA for cytochrome c oxidase subunit I.</title>
        <authorList>
            <person name="Minakata H."/>
            <person name="Iwakoshi E."/>
            <person name="Takuwa K."/>
        </authorList>
    </citation>
    <scope>NUCLEOTIDE SEQUENCE [MRNA]</scope>
</reference>
<comment type="function">
    <text evidence="1">Component of the cytochrome c oxidase, the last enzyme in the mitochondrial electron transport chain which drives oxidative phosphorylation. The respiratory chain contains 3 multisubunit complexes succinate dehydrogenase (complex II, CII), ubiquinol-cytochrome c oxidoreductase (cytochrome b-c1 complex, complex III, CIII) and cytochrome c oxidase (complex IV, CIV), that cooperate to transfer electrons derived from NADH and succinate to molecular oxygen, creating an electrochemical gradient over the inner membrane that drives transmembrane transport and the ATP synthase. Cytochrome c oxidase is the component of the respiratory chain that catalyzes the reduction of oxygen to water. Electrons originating from reduced cytochrome c in the intermembrane space (IMS) are transferred via the dinuclear copper A center (CU(A)) of subunit 2 and heme A of subunit 1 to the active site in subunit 1, a binuclear center (BNC) formed by heme A3 and copper B (CU(B)). The BNC reduces molecular oxygen to 2 water molecules using 4 electrons from cytochrome c in the IMS and 4 protons from the mitochondrial matrix.</text>
</comment>
<comment type="catalytic activity">
    <reaction evidence="1">
        <text>4 Fe(II)-[cytochrome c] + O2 + 8 H(+)(in) = 4 Fe(III)-[cytochrome c] + 2 H2O + 4 H(+)(out)</text>
        <dbReference type="Rhea" id="RHEA:11436"/>
        <dbReference type="Rhea" id="RHEA-COMP:10350"/>
        <dbReference type="Rhea" id="RHEA-COMP:14399"/>
        <dbReference type="ChEBI" id="CHEBI:15377"/>
        <dbReference type="ChEBI" id="CHEBI:15378"/>
        <dbReference type="ChEBI" id="CHEBI:15379"/>
        <dbReference type="ChEBI" id="CHEBI:29033"/>
        <dbReference type="ChEBI" id="CHEBI:29034"/>
        <dbReference type="EC" id="7.1.1.9"/>
    </reaction>
    <physiologicalReaction direction="left-to-right" evidence="1">
        <dbReference type="Rhea" id="RHEA:11437"/>
    </physiologicalReaction>
</comment>
<comment type="cofactor">
    <cofactor evidence="1">
        <name>heme</name>
        <dbReference type="ChEBI" id="CHEBI:30413"/>
    </cofactor>
    <text evidence="1">Binds 2 heme A groups non-covalently per subunit.</text>
</comment>
<comment type="cofactor">
    <cofactor evidence="1">
        <name>Cu cation</name>
        <dbReference type="ChEBI" id="CHEBI:23378"/>
    </cofactor>
    <text evidence="1">Binds a copper B center.</text>
</comment>
<comment type="pathway">
    <text evidence="1">Energy metabolism; oxidative phosphorylation.</text>
</comment>
<comment type="subunit">
    <text evidence="1">Component of the cytochrome c oxidase (complex IV, CIV), a multisubunit enzyme composed of a catalytic core of 3 subunits and several supernumerary subunits. The complex exists as a monomer or a dimer and forms supercomplexes (SCs) in the inner mitochondrial membrane with ubiquinol-cytochrome c oxidoreductase (cytochrome b-c1 complex, complex III, CIII).</text>
</comment>
<comment type="subcellular location">
    <subcellularLocation>
        <location evidence="1">Mitochondrion inner membrane</location>
        <topology evidence="1">Multi-pass membrane protein</topology>
    </subcellularLocation>
</comment>
<comment type="similarity">
    <text evidence="3">Belongs to the heme-copper respiratory oxidase family.</text>
</comment>
<gene>
    <name type="primary">COI</name>
</gene>
<accession>Q9G6J1</accession>
<geneLocation type="mitochondrion"/>
<organism>
    <name type="scientific">Octopus vulgaris</name>
    <name type="common">Common octopus</name>
    <dbReference type="NCBI Taxonomy" id="6645"/>
    <lineage>
        <taxon>Eukaryota</taxon>
        <taxon>Metazoa</taxon>
        <taxon>Spiralia</taxon>
        <taxon>Lophotrochozoa</taxon>
        <taxon>Mollusca</taxon>
        <taxon>Cephalopoda</taxon>
        <taxon>Coleoidea</taxon>
        <taxon>Octopodiformes</taxon>
        <taxon>Octopoda</taxon>
        <taxon>Incirrata</taxon>
        <taxon>Octopodidae</taxon>
        <taxon>Octopus</taxon>
    </lineage>
</organism>
<proteinExistence type="evidence at transcript level"/>
<sequence length="209" mass="22607">GIWSGLLGTSLSLMIRTELGQPGSLLNDDQLYNVIVTAHAFVMIFFLVMPVMIGGFGNWLVPLMLGAPDMAFPRMNNMSFWLLPPSLTLLLSSAAVESGAGTGWTVYPPLSSNLAHMGPSVDLAIFSLHLAGISSILGAINFITTIINMRWEGMLMERLPLFVWSVFITAILLLLSLPVLAGAITMLLTDRNFNTTFFDPSGGGDPILY</sequence>
<name>COX1_OCTVU</name>
<feature type="chain" id="PRO_0000183368" description="Cytochrome c oxidase subunit 1">
    <location>
        <begin position="1" status="less than"/>
        <end position="209" status="greater than"/>
    </location>
</feature>
<feature type="transmembrane region" description="Helical; Name=1" evidence="2">
    <location>
        <begin position="1" status="less than"/>
        <end position="21"/>
    </location>
</feature>
<feature type="topological domain" description="Mitochondrial intermembrane" evidence="2">
    <location>
        <begin position="22"/>
        <end position="33"/>
    </location>
</feature>
<feature type="transmembrane region" description="Helical; Name=2" evidence="2">
    <location>
        <begin position="34"/>
        <end position="54"/>
    </location>
</feature>
<feature type="topological domain" description="Mitochondrial matrix" evidence="2">
    <location>
        <begin position="55"/>
        <end position="79"/>
    </location>
</feature>
<feature type="transmembrane region" description="Helical; Name=3" evidence="2">
    <location>
        <begin position="80"/>
        <end position="100"/>
    </location>
</feature>
<feature type="topological domain" description="Mitochondrial intermembrane" evidence="2">
    <location>
        <begin position="101"/>
        <end position="122"/>
    </location>
</feature>
<feature type="transmembrane region" description="Helical; Name=4" evidence="2">
    <location>
        <begin position="123"/>
        <end position="143"/>
    </location>
</feature>
<feature type="topological domain" description="Mitochondrial matrix" evidence="2">
    <location>
        <begin position="144"/>
        <end position="160"/>
    </location>
</feature>
<feature type="transmembrane region" description="Helical; Name=5" evidence="2">
    <location>
        <begin position="161"/>
        <end position="181"/>
    </location>
</feature>
<feature type="topological domain" description="Mitochondrial intermembrane" evidence="2">
    <location>
        <begin position="182"/>
        <end position="209"/>
    </location>
</feature>
<feature type="binding site" evidence="1">
    <location>
        <position position="18"/>
    </location>
    <ligand>
        <name>Ca(2+)</name>
        <dbReference type="ChEBI" id="CHEBI:29108"/>
    </ligand>
</feature>
<feature type="binding site" evidence="1">
    <location>
        <position position="23"/>
    </location>
    <ligand>
        <name>Ca(2+)</name>
        <dbReference type="ChEBI" id="CHEBI:29108"/>
    </ligand>
</feature>
<feature type="binding site" description="axial binding residue" evidence="1">
    <location>
        <position position="39"/>
    </location>
    <ligand>
        <name>Fe(II)-heme a</name>
        <dbReference type="ChEBI" id="CHEBI:61715"/>
        <note>low-spin</note>
    </ligand>
    <ligandPart>
        <name>Fe</name>
        <dbReference type="ChEBI" id="CHEBI:18248"/>
    </ligandPart>
</feature>
<feature type="non-terminal residue">
    <location>
        <position position="1"/>
    </location>
</feature>
<feature type="non-terminal residue">
    <location>
        <position position="209"/>
    </location>
</feature>
<evidence type="ECO:0000250" key="1">
    <source>
        <dbReference type="UniProtKB" id="P00401"/>
    </source>
</evidence>
<evidence type="ECO:0000255" key="2"/>
<evidence type="ECO:0000305" key="3"/>
<dbReference type="EC" id="7.1.1.9"/>
<dbReference type="EMBL" id="AB052253">
    <property type="protein sequence ID" value="BAB18938.1"/>
    <property type="molecule type" value="mRNA"/>
</dbReference>
<dbReference type="SMR" id="Q9G6J1"/>
<dbReference type="UniPathway" id="UPA00705"/>
<dbReference type="Proteomes" id="UP000515154">
    <property type="component" value="Mitochondrion MT"/>
</dbReference>
<dbReference type="GO" id="GO:0005743">
    <property type="term" value="C:mitochondrial inner membrane"/>
    <property type="evidence" value="ECO:0007669"/>
    <property type="project" value="UniProtKB-SubCell"/>
</dbReference>
<dbReference type="GO" id="GO:0004129">
    <property type="term" value="F:cytochrome-c oxidase activity"/>
    <property type="evidence" value="ECO:0007669"/>
    <property type="project" value="UniProtKB-EC"/>
</dbReference>
<dbReference type="GO" id="GO:0020037">
    <property type="term" value="F:heme binding"/>
    <property type="evidence" value="ECO:0007669"/>
    <property type="project" value="InterPro"/>
</dbReference>
<dbReference type="GO" id="GO:0046872">
    <property type="term" value="F:metal ion binding"/>
    <property type="evidence" value="ECO:0007669"/>
    <property type="project" value="UniProtKB-KW"/>
</dbReference>
<dbReference type="GO" id="GO:0015990">
    <property type="term" value="P:electron transport coupled proton transport"/>
    <property type="evidence" value="ECO:0007669"/>
    <property type="project" value="TreeGrafter"/>
</dbReference>
<dbReference type="GO" id="GO:0006123">
    <property type="term" value="P:mitochondrial electron transport, cytochrome c to oxygen"/>
    <property type="evidence" value="ECO:0007669"/>
    <property type="project" value="TreeGrafter"/>
</dbReference>
<dbReference type="Gene3D" id="1.20.210.10">
    <property type="entry name" value="Cytochrome c oxidase-like, subunit I domain"/>
    <property type="match status" value="1"/>
</dbReference>
<dbReference type="InterPro" id="IPR023616">
    <property type="entry name" value="Cyt_c_oxase-like_su1_dom"/>
</dbReference>
<dbReference type="InterPro" id="IPR036927">
    <property type="entry name" value="Cyt_c_oxase-like_su1_sf"/>
</dbReference>
<dbReference type="InterPro" id="IPR000883">
    <property type="entry name" value="Cyt_C_Oxase_1"/>
</dbReference>
<dbReference type="PANTHER" id="PTHR10422">
    <property type="entry name" value="CYTOCHROME C OXIDASE SUBUNIT 1"/>
    <property type="match status" value="1"/>
</dbReference>
<dbReference type="PANTHER" id="PTHR10422:SF18">
    <property type="entry name" value="CYTOCHROME C OXIDASE SUBUNIT 1"/>
    <property type="match status" value="1"/>
</dbReference>
<dbReference type="Pfam" id="PF00115">
    <property type="entry name" value="COX1"/>
    <property type="match status" value="1"/>
</dbReference>
<dbReference type="PRINTS" id="PR01165">
    <property type="entry name" value="CYCOXIDASEI"/>
</dbReference>
<dbReference type="SUPFAM" id="SSF81442">
    <property type="entry name" value="Cytochrome c oxidase subunit I-like"/>
    <property type="match status" value="1"/>
</dbReference>
<dbReference type="PROSITE" id="PS50855">
    <property type="entry name" value="COX1"/>
    <property type="match status" value="1"/>
</dbReference>